<accession>P11735</accession>
<name>CU30_LOCMI</name>
<organism>
    <name type="scientific">Locusta migratoria</name>
    <name type="common">Migratory locust</name>
    <dbReference type="NCBI Taxonomy" id="7004"/>
    <lineage>
        <taxon>Eukaryota</taxon>
        <taxon>Metazoa</taxon>
        <taxon>Ecdysozoa</taxon>
        <taxon>Arthropoda</taxon>
        <taxon>Hexapoda</taxon>
        <taxon>Insecta</taxon>
        <taxon>Pterygota</taxon>
        <taxon>Neoptera</taxon>
        <taxon>Polyneoptera</taxon>
        <taxon>Orthoptera</taxon>
        <taxon>Caelifera</taxon>
        <taxon>Acrididea</taxon>
        <taxon>Acridomorpha</taxon>
        <taxon>Acridoidea</taxon>
        <taxon>Acrididae</taxon>
        <taxon>Oedipodinae</taxon>
        <taxon>Locusta</taxon>
    </lineage>
</organism>
<protein>
    <recommendedName>
        <fullName>Cuticle protein 30</fullName>
    </recommendedName>
    <alternativeName>
        <fullName>LM-ACP 30</fullName>
        <shortName>LM-30</shortName>
    </alternativeName>
</protein>
<comment type="function">
    <text>Component of the cuticle of migratory locust which contains more than 100 different structural proteins.</text>
</comment>
<proteinExistence type="evidence at protein level"/>
<feature type="chain" id="PRO_0000196102" description="Cuticle protein 30">
    <location>
        <begin position="1"/>
        <end position="10" status="greater than"/>
    </location>
</feature>
<feature type="non-terminal residue">
    <location>
        <position position="10"/>
    </location>
</feature>
<dbReference type="PIR" id="H24802">
    <property type="entry name" value="H24802"/>
</dbReference>
<dbReference type="GO" id="GO:0042302">
    <property type="term" value="F:structural constituent of cuticle"/>
    <property type="evidence" value="ECO:0007669"/>
    <property type="project" value="UniProtKB-KW"/>
</dbReference>
<sequence length="10" mass="969">GLLGLGYGGY</sequence>
<keyword id="KW-0193">Cuticle</keyword>
<keyword id="KW-0903">Direct protein sequencing</keyword>
<reference key="1">
    <citation type="journal article" date="1986" name="Eur. J. Biochem.">
        <title>Isolation, characterization, and N-terminal sequence studies of cuticular proteins from the migratory locust, Locusta migratoria.</title>
        <authorList>
            <person name="Hoejrup P."/>
            <person name="Andersen S.O."/>
            <person name="Roepstorff P."/>
        </authorList>
    </citation>
    <scope>PROTEIN SEQUENCE</scope>
</reference>